<dbReference type="EC" id="2.7.1.16" evidence="1"/>
<dbReference type="EMBL" id="CU928158">
    <property type="protein sequence ID" value="CAQ87658.1"/>
    <property type="molecule type" value="Genomic_DNA"/>
</dbReference>
<dbReference type="RefSeq" id="WP_000951831.1">
    <property type="nucleotide sequence ID" value="NC_011740.1"/>
</dbReference>
<dbReference type="SMR" id="B7LVT4"/>
<dbReference type="GeneID" id="75058840"/>
<dbReference type="KEGG" id="efe:EFER_0072"/>
<dbReference type="HOGENOM" id="CLU_009281_9_1_6"/>
<dbReference type="OrthoDB" id="9805576at2"/>
<dbReference type="UniPathway" id="UPA00145">
    <property type="reaction ID" value="UER00566"/>
</dbReference>
<dbReference type="Proteomes" id="UP000000745">
    <property type="component" value="Chromosome"/>
</dbReference>
<dbReference type="GO" id="GO:0005737">
    <property type="term" value="C:cytoplasm"/>
    <property type="evidence" value="ECO:0007669"/>
    <property type="project" value="TreeGrafter"/>
</dbReference>
<dbReference type="GO" id="GO:0005524">
    <property type="term" value="F:ATP binding"/>
    <property type="evidence" value="ECO:0007669"/>
    <property type="project" value="UniProtKB-KW"/>
</dbReference>
<dbReference type="GO" id="GO:0019150">
    <property type="term" value="F:D-ribulokinase activity"/>
    <property type="evidence" value="ECO:0007669"/>
    <property type="project" value="TreeGrafter"/>
</dbReference>
<dbReference type="GO" id="GO:0008741">
    <property type="term" value="F:ribulokinase activity"/>
    <property type="evidence" value="ECO:0007669"/>
    <property type="project" value="UniProtKB-UniRule"/>
</dbReference>
<dbReference type="GO" id="GO:0019569">
    <property type="term" value="P:L-arabinose catabolic process to xylulose 5-phosphate"/>
    <property type="evidence" value="ECO:0007669"/>
    <property type="project" value="UniProtKB-UniRule"/>
</dbReference>
<dbReference type="CDD" id="cd07781">
    <property type="entry name" value="ASKHA_NBD_FGGY_L-RBK"/>
    <property type="match status" value="1"/>
</dbReference>
<dbReference type="Gene3D" id="1.20.58.2240">
    <property type="match status" value="1"/>
</dbReference>
<dbReference type="Gene3D" id="3.30.420.40">
    <property type="match status" value="1"/>
</dbReference>
<dbReference type="HAMAP" id="MF_00520">
    <property type="entry name" value="Ribulokinase"/>
    <property type="match status" value="1"/>
</dbReference>
<dbReference type="InterPro" id="IPR043129">
    <property type="entry name" value="ATPase_NBD"/>
</dbReference>
<dbReference type="InterPro" id="IPR018485">
    <property type="entry name" value="FGGY_C"/>
</dbReference>
<dbReference type="InterPro" id="IPR005929">
    <property type="entry name" value="Ribulokinase"/>
</dbReference>
<dbReference type="NCBIfam" id="TIGR01234">
    <property type="entry name" value="L-ribulokinase"/>
    <property type="match status" value="1"/>
</dbReference>
<dbReference type="NCBIfam" id="NF003154">
    <property type="entry name" value="PRK04123.1"/>
    <property type="match status" value="1"/>
</dbReference>
<dbReference type="PANTHER" id="PTHR43435:SF4">
    <property type="entry name" value="FGGY CARBOHYDRATE KINASE DOMAIN-CONTAINING PROTEIN"/>
    <property type="match status" value="1"/>
</dbReference>
<dbReference type="PANTHER" id="PTHR43435">
    <property type="entry name" value="RIBULOKINASE"/>
    <property type="match status" value="1"/>
</dbReference>
<dbReference type="Pfam" id="PF02782">
    <property type="entry name" value="FGGY_C"/>
    <property type="match status" value="1"/>
</dbReference>
<dbReference type="SUPFAM" id="SSF53067">
    <property type="entry name" value="Actin-like ATPase domain"/>
    <property type="match status" value="2"/>
</dbReference>
<keyword id="KW-0054">Arabinose catabolism</keyword>
<keyword id="KW-0067">ATP-binding</keyword>
<keyword id="KW-0119">Carbohydrate metabolism</keyword>
<keyword id="KW-0418">Kinase</keyword>
<keyword id="KW-0547">Nucleotide-binding</keyword>
<keyword id="KW-0808">Transferase</keyword>
<sequence>MAIAIGLDFGSDSVRALAVDCATGEEIATSVEWYPRWQKGQFCDAPNNQFRHHPRDYIESMEAALKTVLAALSAEQRATVVGIGVDTTGSTPAPIDADGNVLALRPEFAENPNAMFVLWKDHTAVEEAEAITRLCHTPGNVDYSRYIGGIYSSEWFWAKILHVTRQDSAVAQSAASWIELCDWVPALLSGTTRPQDIRRGRCSAGHKSLWHESWGGLPPASFFDELDPILNRHLPSPLFTDTWTADIPVGTLCPEWAQHLGLPESVVISGGAFDCHMGAVGAGAQPNALVKVIGTSTCDILIADKQSVGERAVKGICGQVDGSVVPGFIGLEAGQSAFGDIYAWFGRVLGWPLEQLAARHPELKEQIKASQKQLLPALTEAWAKNPSLDHLPVVLDWFNGRRTPNANQRLKGVITDLNLATDAPLLFGGLIAATAFGARAIMECFTDQGIAVNNVMALGGIARKNQVIMQACCDVLNRPLQIVASDQCCALGAAIFAAVAAKVHADIPSAQQKMASAVEKTLQPRSEQAQRFEQLYRRYQQWAMSAEQHYLPTSAPALADQAVPTL</sequence>
<feature type="chain" id="PRO_1000127634" description="Ribulokinase">
    <location>
        <begin position="1"/>
        <end position="566"/>
    </location>
</feature>
<organism>
    <name type="scientific">Escherichia fergusonii (strain ATCC 35469 / DSM 13698 / CCUG 18766 / IAM 14443 / JCM 21226 / LMG 7866 / NBRC 102419 / NCTC 12128 / CDC 0568-73)</name>
    <dbReference type="NCBI Taxonomy" id="585054"/>
    <lineage>
        <taxon>Bacteria</taxon>
        <taxon>Pseudomonadati</taxon>
        <taxon>Pseudomonadota</taxon>
        <taxon>Gammaproteobacteria</taxon>
        <taxon>Enterobacterales</taxon>
        <taxon>Enterobacteriaceae</taxon>
        <taxon>Escherichia</taxon>
    </lineage>
</organism>
<evidence type="ECO:0000255" key="1">
    <source>
        <dbReference type="HAMAP-Rule" id="MF_00520"/>
    </source>
</evidence>
<protein>
    <recommendedName>
        <fullName evidence="1">Ribulokinase</fullName>
        <ecNumber evidence="1">2.7.1.16</ecNumber>
    </recommendedName>
</protein>
<comment type="catalytic activity">
    <reaction evidence="1">
        <text>D-ribulose + ATP = D-ribulose 5-phosphate + ADP + H(+)</text>
        <dbReference type="Rhea" id="RHEA:17601"/>
        <dbReference type="ChEBI" id="CHEBI:15378"/>
        <dbReference type="ChEBI" id="CHEBI:17173"/>
        <dbReference type="ChEBI" id="CHEBI:30616"/>
        <dbReference type="ChEBI" id="CHEBI:58121"/>
        <dbReference type="ChEBI" id="CHEBI:456216"/>
        <dbReference type="EC" id="2.7.1.16"/>
    </reaction>
</comment>
<comment type="catalytic activity">
    <reaction evidence="1">
        <text>L-ribulose + ATP = L-ribulose 5-phosphate + ADP + H(+)</text>
        <dbReference type="Rhea" id="RHEA:22072"/>
        <dbReference type="ChEBI" id="CHEBI:15378"/>
        <dbReference type="ChEBI" id="CHEBI:16880"/>
        <dbReference type="ChEBI" id="CHEBI:30616"/>
        <dbReference type="ChEBI" id="CHEBI:58226"/>
        <dbReference type="ChEBI" id="CHEBI:456216"/>
        <dbReference type="EC" id="2.7.1.16"/>
    </reaction>
</comment>
<comment type="pathway">
    <text evidence="1">Carbohydrate degradation; L-arabinose degradation via L-ribulose; D-xylulose 5-phosphate from L-arabinose (bacterial route): step 2/3.</text>
</comment>
<comment type="similarity">
    <text evidence="1">Belongs to the ribulokinase family.</text>
</comment>
<accession>B7LVT4</accession>
<reference key="1">
    <citation type="journal article" date="2009" name="PLoS Genet.">
        <title>Organised genome dynamics in the Escherichia coli species results in highly diverse adaptive paths.</title>
        <authorList>
            <person name="Touchon M."/>
            <person name="Hoede C."/>
            <person name="Tenaillon O."/>
            <person name="Barbe V."/>
            <person name="Baeriswyl S."/>
            <person name="Bidet P."/>
            <person name="Bingen E."/>
            <person name="Bonacorsi S."/>
            <person name="Bouchier C."/>
            <person name="Bouvet O."/>
            <person name="Calteau A."/>
            <person name="Chiapello H."/>
            <person name="Clermont O."/>
            <person name="Cruveiller S."/>
            <person name="Danchin A."/>
            <person name="Diard M."/>
            <person name="Dossat C."/>
            <person name="Karoui M.E."/>
            <person name="Frapy E."/>
            <person name="Garry L."/>
            <person name="Ghigo J.M."/>
            <person name="Gilles A.M."/>
            <person name="Johnson J."/>
            <person name="Le Bouguenec C."/>
            <person name="Lescat M."/>
            <person name="Mangenot S."/>
            <person name="Martinez-Jehanne V."/>
            <person name="Matic I."/>
            <person name="Nassif X."/>
            <person name="Oztas S."/>
            <person name="Petit M.A."/>
            <person name="Pichon C."/>
            <person name="Rouy Z."/>
            <person name="Ruf C.S."/>
            <person name="Schneider D."/>
            <person name="Tourret J."/>
            <person name="Vacherie B."/>
            <person name="Vallenet D."/>
            <person name="Medigue C."/>
            <person name="Rocha E.P.C."/>
            <person name="Denamur E."/>
        </authorList>
    </citation>
    <scope>NUCLEOTIDE SEQUENCE [LARGE SCALE GENOMIC DNA]</scope>
    <source>
        <strain>ATCC 35469 / DSM 13698 / BCRC 15582 / CCUG 18766 / IAM 14443 / JCM 21226 / LMG 7866 / NBRC 102419 / NCTC 12128 / CDC 0568-73</strain>
    </source>
</reference>
<name>ARAB_ESCF3</name>
<proteinExistence type="inferred from homology"/>
<gene>
    <name evidence="1" type="primary">araB</name>
    <name type="ordered locus">EFER_0072</name>
</gene>